<proteinExistence type="inferred from homology"/>
<comment type="subcellular location">
    <subcellularLocation>
        <location evidence="1">Cell inner membrane</location>
        <topology evidence="1">Multi-pass membrane protein</topology>
    </subcellularLocation>
</comment>
<comment type="similarity">
    <text evidence="1">Belongs to the UPF0060 family.</text>
</comment>
<sequence length="108" mass="11231">MGLSLAAYAGAALAEIAGCFAVWAWWRLGASALWLVPGALSLGAFAWLLALTPVEVAGRSYAVYGGIYVAASLLWLWAVEGVRPDRWDMGGAALVLAGAAVILWAPRG</sequence>
<reference key="1">
    <citation type="journal article" date="2009" name="J. Bacteriol.">
        <title>Complete genome sequence of Rhodobacter sphaeroides KD131.</title>
        <authorList>
            <person name="Lim S.-K."/>
            <person name="Kim S.J."/>
            <person name="Cha S.H."/>
            <person name="Oh Y.-K."/>
            <person name="Rhee H.-J."/>
            <person name="Kim M.-S."/>
            <person name="Lee J.K."/>
        </authorList>
    </citation>
    <scope>NUCLEOTIDE SEQUENCE [LARGE SCALE GENOMIC DNA]</scope>
    <source>
        <strain>KD131 / KCTC 12085</strain>
    </source>
</reference>
<gene>
    <name type="ordered locus">RSKD131_0092</name>
</gene>
<name>Y092_CERSK</name>
<evidence type="ECO:0000255" key="1">
    <source>
        <dbReference type="HAMAP-Rule" id="MF_00010"/>
    </source>
</evidence>
<accession>B9KLG9</accession>
<protein>
    <recommendedName>
        <fullName evidence="1">UPF0060 membrane protein RSKD131_0092</fullName>
    </recommendedName>
</protein>
<keyword id="KW-0997">Cell inner membrane</keyword>
<keyword id="KW-1003">Cell membrane</keyword>
<keyword id="KW-0472">Membrane</keyword>
<keyword id="KW-0812">Transmembrane</keyword>
<keyword id="KW-1133">Transmembrane helix</keyword>
<organism>
    <name type="scientific">Cereibacter sphaeroides (strain KD131 / KCTC 12085)</name>
    <name type="common">Rhodobacter sphaeroides</name>
    <dbReference type="NCBI Taxonomy" id="557760"/>
    <lineage>
        <taxon>Bacteria</taxon>
        <taxon>Pseudomonadati</taxon>
        <taxon>Pseudomonadota</taxon>
        <taxon>Alphaproteobacteria</taxon>
        <taxon>Rhodobacterales</taxon>
        <taxon>Paracoccaceae</taxon>
        <taxon>Cereibacter</taxon>
    </lineage>
</organism>
<feature type="chain" id="PRO_1000197499" description="UPF0060 membrane protein RSKD131_0092">
    <location>
        <begin position="1"/>
        <end position="108"/>
    </location>
</feature>
<feature type="transmembrane region" description="Helical" evidence="1">
    <location>
        <begin position="5"/>
        <end position="25"/>
    </location>
</feature>
<feature type="transmembrane region" description="Helical" evidence="1">
    <location>
        <begin position="32"/>
        <end position="52"/>
    </location>
</feature>
<feature type="transmembrane region" description="Helical" evidence="1">
    <location>
        <begin position="62"/>
        <end position="82"/>
    </location>
</feature>
<feature type="transmembrane region" description="Helical" evidence="1">
    <location>
        <begin position="86"/>
        <end position="106"/>
    </location>
</feature>
<dbReference type="EMBL" id="CP001150">
    <property type="protein sequence ID" value="ACL99951.1"/>
    <property type="molecule type" value="Genomic_DNA"/>
</dbReference>
<dbReference type="RefSeq" id="WP_012643474.1">
    <property type="nucleotide sequence ID" value="NC_011963.1"/>
</dbReference>
<dbReference type="SMR" id="B9KLG9"/>
<dbReference type="GeneID" id="67445577"/>
<dbReference type="KEGG" id="rsk:RSKD131_0092"/>
<dbReference type="HOGENOM" id="CLU_117653_1_0_5"/>
<dbReference type="GO" id="GO:0005886">
    <property type="term" value="C:plasma membrane"/>
    <property type="evidence" value="ECO:0007669"/>
    <property type="project" value="UniProtKB-SubCell"/>
</dbReference>
<dbReference type="HAMAP" id="MF_00010">
    <property type="entry name" value="UPF0060"/>
    <property type="match status" value="1"/>
</dbReference>
<dbReference type="InterPro" id="IPR003844">
    <property type="entry name" value="UPF0060"/>
</dbReference>
<dbReference type="NCBIfam" id="NF002586">
    <property type="entry name" value="PRK02237.1"/>
    <property type="match status" value="1"/>
</dbReference>
<dbReference type="PANTHER" id="PTHR36116">
    <property type="entry name" value="UPF0060 MEMBRANE PROTEIN YNFA"/>
    <property type="match status" value="1"/>
</dbReference>
<dbReference type="PANTHER" id="PTHR36116:SF1">
    <property type="entry name" value="UPF0060 MEMBRANE PROTEIN YNFA"/>
    <property type="match status" value="1"/>
</dbReference>
<dbReference type="Pfam" id="PF02694">
    <property type="entry name" value="UPF0060"/>
    <property type="match status" value="1"/>
</dbReference>
<dbReference type="SUPFAM" id="SSF103481">
    <property type="entry name" value="Multidrug resistance efflux transporter EmrE"/>
    <property type="match status" value="1"/>
</dbReference>